<feature type="initiator methionine" description="Removed" evidence="1">
    <location>
        <position position="1"/>
    </location>
</feature>
<feature type="chain" id="PRO_0000199934" description="Sulfite reductase [NADPH] flavoprotein alpha-component">
    <location>
        <begin position="2"/>
        <end position="599"/>
    </location>
</feature>
<feature type="domain" description="Flavodoxin-like" evidence="2">
    <location>
        <begin position="64"/>
        <end position="202"/>
    </location>
</feature>
<feature type="domain" description="FAD-binding FR-type" evidence="2">
    <location>
        <begin position="234"/>
        <end position="448"/>
    </location>
</feature>
<feature type="binding site" evidence="2">
    <location>
        <begin position="70"/>
        <end position="75"/>
    </location>
    <ligand>
        <name>FMN</name>
        <dbReference type="ChEBI" id="CHEBI:58210"/>
    </ligand>
</feature>
<feature type="binding site" evidence="2">
    <location>
        <begin position="117"/>
        <end position="120"/>
    </location>
    <ligand>
        <name>FMN</name>
        <dbReference type="ChEBI" id="CHEBI:58210"/>
    </ligand>
</feature>
<feature type="binding site" evidence="2">
    <location>
        <begin position="153"/>
        <end position="162"/>
    </location>
    <ligand>
        <name>FMN</name>
        <dbReference type="ChEBI" id="CHEBI:58210"/>
    </ligand>
</feature>
<feature type="binding site" evidence="2">
    <location>
        <position position="322"/>
    </location>
    <ligand>
        <name>FAD</name>
        <dbReference type="ChEBI" id="CHEBI:57692"/>
    </ligand>
</feature>
<feature type="binding site" evidence="2">
    <location>
        <position position="356"/>
    </location>
    <ligand>
        <name>FAD</name>
        <dbReference type="ChEBI" id="CHEBI:57692"/>
    </ligand>
</feature>
<feature type="binding site" evidence="2">
    <location>
        <begin position="386"/>
        <end position="389"/>
    </location>
    <ligand>
        <name>FAD</name>
        <dbReference type="ChEBI" id="CHEBI:57692"/>
    </ligand>
</feature>
<feature type="binding site" evidence="2">
    <location>
        <begin position="404"/>
        <end position="406"/>
    </location>
    <ligand>
        <name>FAD</name>
        <dbReference type="ChEBI" id="CHEBI:57692"/>
    </ligand>
</feature>
<feature type="binding site" evidence="2">
    <location>
        <position position="410"/>
    </location>
    <ligand>
        <name>FAD</name>
        <dbReference type="ChEBI" id="CHEBI:57692"/>
    </ligand>
</feature>
<feature type="binding site" evidence="2">
    <location>
        <begin position="419"/>
        <end position="422"/>
    </location>
    <ligand>
        <name>FAD</name>
        <dbReference type="ChEBI" id="CHEBI:57692"/>
    </ligand>
</feature>
<feature type="binding site" evidence="2">
    <location>
        <begin position="519"/>
        <end position="520"/>
    </location>
    <ligand>
        <name>NADP(+)</name>
        <dbReference type="ChEBI" id="CHEBI:58349"/>
    </ligand>
</feature>
<feature type="binding site" evidence="2">
    <location>
        <begin position="525"/>
        <end position="529"/>
    </location>
    <ligand>
        <name>NADP(+)</name>
        <dbReference type="ChEBI" id="CHEBI:58349"/>
    </ligand>
</feature>
<feature type="binding site" evidence="2">
    <location>
        <position position="561"/>
    </location>
    <ligand>
        <name>NADP(+)</name>
        <dbReference type="ChEBI" id="CHEBI:58349"/>
    </ligand>
</feature>
<feature type="binding site" evidence="2">
    <location>
        <position position="599"/>
    </location>
    <ligand>
        <name>FAD</name>
        <dbReference type="ChEBI" id="CHEBI:57692"/>
    </ligand>
</feature>
<dbReference type="EC" id="1.8.1.2" evidence="2"/>
<dbReference type="EMBL" id="AL513382">
    <property type="protein sequence ID" value="CAD06054.1"/>
    <property type="molecule type" value="Genomic_DNA"/>
</dbReference>
<dbReference type="EMBL" id="AE014613">
    <property type="protein sequence ID" value="AAO70406.1"/>
    <property type="molecule type" value="Genomic_DNA"/>
</dbReference>
<dbReference type="RefSeq" id="NP_457337.1">
    <property type="nucleotide sequence ID" value="NC_003198.1"/>
</dbReference>
<dbReference type="RefSeq" id="WP_000210901.1">
    <property type="nucleotide sequence ID" value="NZ_WSUR01000005.1"/>
</dbReference>
<dbReference type="SMR" id="Q8Z458"/>
<dbReference type="STRING" id="220341.gene:17586964"/>
<dbReference type="KEGG" id="stt:t2849"/>
<dbReference type="KEGG" id="sty:STY3076"/>
<dbReference type="PATRIC" id="fig|220341.7.peg.3129"/>
<dbReference type="eggNOG" id="COG0369">
    <property type="taxonomic scope" value="Bacteria"/>
</dbReference>
<dbReference type="HOGENOM" id="CLU_001570_17_7_6"/>
<dbReference type="OMA" id="QKRYQRD"/>
<dbReference type="OrthoDB" id="9816402at2"/>
<dbReference type="UniPathway" id="UPA00140">
    <property type="reaction ID" value="UER00207"/>
</dbReference>
<dbReference type="Proteomes" id="UP000000541">
    <property type="component" value="Chromosome"/>
</dbReference>
<dbReference type="Proteomes" id="UP000002670">
    <property type="component" value="Chromosome"/>
</dbReference>
<dbReference type="GO" id="GO:0005829">
    <property type="term" value="C:cytosol"/>
    <property type="evidence" value="ECO:0007669"/>
    <property type="project" value="TreeGrafter"/>
</dbReference>
<dbReference type="GO" id="GO:0050660">
    <property type="term" value="F:flavin adenine dinucleotide binding"/>
    <property type="evidence" value="ECO:0007669"/>
    <property type="project" value="InterPro"/>
</dbReference>
<dbReference type="GO" id="GO:0010181">
    <property type="term" value="F:FMN binding"/>
    <property type="evidence" value="ECO:0007669"/>
    <property type="project" value="InterPro"/>
</dbReference>
<dbReference type="GO" id="GO:0004783">
    <property type="term" value="F:sulfite reductase (NADPH) activity"/>
    <property type="evidence" value="ECO:0007669"/>
    <property type="project" value="UniProtKB-UniRule"/>
</dbReference>
<dbReference type="GO" id="GO:0019344">
    <property type="term" value="P:cysteine biosynthetic process"/>
    <property type="evidence" value="ECO:0007669"/>
    <property type="project" value="UniProtKB-KW"/>
</dbReference>
<dbReference type="GO" id="GO:0070814">
    <property type="term" value="P:hydrogen sulfide biosynthetic process"/>
    <property type="evidence" value="ECO:0007669"/>
    <property type="project" value="UniProtKB-UniRule"/>
</dbReference>
<dbReference type="GO" id="GO:0000103">
    <property type="term" value="P:sulfate assimilation"/>
    <property type="evidence" value="ECO:0007669"/>
    <property type="project" value="UniProtKB-UniRule"/>
</dbReference>
<dbReference type="CDD" id="cd06199">
    <property type="entry name" value="SiR"/>
    <property type="match status" value="1"/>
</dbReference>
<dbReference type="FunFam" id="3.40.50.80:FF:000001">
    <property type="entry name" value="NADPH--cytochrome P450 reductase 1"/>
    <property type="match status" value="1"/>
</dbReference>
<dbReference type="FunFam" id="1.20.990.10:FF:000004">
    <property type="entry name" value="Sulfite reductase [NADPH] flavoprotein alpha-component"/>
    <property type="match status" value="1"/>
</dbReference>
<dbReference type="FunFam" id="3.40.50.360:FF:000018">
    <property type="entry name" value="Sulfite reductase [NADPH] flavoprotein alpha-component"/>
    <property type="match status" value="1"/>
</dbReference>
<dbReference type="Gene3D" id="3.40.50.360">
    <property type="match status" value="1"/>
</dbReference>
<dbReference type="Gene3D" id="1.20.990.10">
    <property type="entry name" value="NADPH-cytochrome p450 Reductase, Chain A, domain 3"/>
    <property type="match status" value="1"/>
</dbReference>
<dbReference type="Gene3D" id="3.40.50.80">
    <property type="entry name" value="Nucleotide-binding domain of ferredoxin-NADP reductase (FNR) module"/>
    <property type="match status" value="1"/>
</dbReference>
<dbReference type="Gene3D" id="2.40.30.10">
    <property type="entry name" value="Translation factors"/>
    <property type="match status" value="1"/>
</dbReference>
<dbReference type="HAMAP" id="MF_01541">
    <property type="entry name" value="CysJ"/>
    <property type="match status" value="1"/>
</dbReference>
<dbReference type="InterPro" id="IPR010199">
    <property type="entry name" value="CysJ"/>
</dbReference>
<dbReference type="InterPro" id="IPR003097">
    <property type="entry name" value="CysJ-like_FAD-binding"/>
</dbReference>
<dbReference type="InterPro" id="IPR029758">
    <property type="entry name" value="CysJ_Proteobact"/>
</dbReference>
<dbReference type="InterPro" id="IPR017927">
    <property type="entry name" value="FAD-bd_FR_type"/>
</dbReference>
<dbReference type="InterPro" id="IPR001094">
    <property type="entry name" value="Flavdoxin-like"/>
</dbReference>
<dbReference type="InterPro" id="IPR008254">
    <property type="entry name" value="Flavodoxin/NO_synth"/>
</dbReference>
<dbReference type="InterPro" id="IPR001709">
    <property type="entry name" value="Flavoprot_Pyr_Nucl_cyt_Rdtase"/>
</dbReference>
<dbReference type="InterPro" id="IPR029039">
    <property type="entry name" value="Flavoprotein-like_sf"/>
</dbReference>
<dbReference type="InterPro" id="IPR039261">
    <property type="entry name" value="FNR_nucleotide-bd"/>
</dbReference>
<dbReference type="InterPro" id="IPR023173">
    <property type="entry name" value="NADPH_Cyt_P450_Rdtase_alpha"/>
</dbReference>
<dbReference type="InterPro" id="IPR001433">
    <property type="entry name" value="OxRdtase_FAD/NAD-bd"/>
</dbReference>
<dbReference type="InterPro" id="IPR017938">
    <property type="entry name" value="Riboflavin_synthase-like_b-brl"/>
</dbReference>
<dbReference type="NCBIfam" id="TIGR01931">
    <property type="entry name" value="cysJ"/>
    <property type="match status" value="1"/>
</dbReference>
<dbReference type="NCBIfam" id="NF008197">
    <property type="entry name" value="PRK10953.1"/>
    <property type="match status" value="1"/>
</dbReference>
<dbReference type="PANTHER" id="PTHR19384:SF128">
    <property type="entry name" value="NADPH OXIDOREDUCTASE A"/>
    <property type="match status" value="1"/>
</dbReference>
<dbReference type="PANTHER" id="PTHR19384">
    <property type="entry name" value="NITRIC OXIDE SYNTHASE-RELATED"/>
    <property type="match status" value="1"/>
</dbReference>
<dbReference type="Pfam" id="PF00667">
    <property type="entry name" value="FAD_binding_1"/>
    <property type="match status" value="1"/>
</dbReference>
<dbReference type="Pfam" id="PF00258">
    <property type="entry name" value="Flavodoxin_1"/>
    <property type="match status" value="1"/>
</dbReference>
<dbReference type="Pfam" id="PF00175">
    <property type="entry name" value="NAD_binding_1"/>
    <property type="match status" value="1"/>
</dbReference>
<dbReference type="PIRSF" id="PIRSF000207">
    <property type="entry name" value="SiR-FP_CysJ"/>
    <property type="match status" value="1"/>
</dbReference>
<dbReference type="PRINTS" id="PR00369">
    <property type="entry name" value="FLAVODOXIN"/>
</dbReference>
<dbReference type="PRINTS" id="PR00371">
    <property type="entry name" value="FPNCR"/>
</dbReference>
<dbReference type="SUPFAM" id="SSF52343">
    <property type="entry name" value="Ferredoxin reductase-like, C-terminal NADP-linked domain"/>
    <property type="match status" value="1"/>
</dbReference>
<dbReference type="SUPFAM" id="SSF52218">
    <property type="entry name" value="Flavoproteins"/>
    <property type="match status" value="1"/>
</dbReference>
<dbReference type="SUPFAM" id="SSF63380">
    <property type="entry name" value="Riboflavin synthase domain-like"/>
    <property type="match status" value="1"/>
</dbReference>
<dbReference type="PROSITE" id="PS51384">
    <property type="entry name" value="FAD_FR"/>
    <property type="match status" value="1"/>
</dbReference>
<dbReference type="PROSITE" id="PS50902">
    <property type="entry name" value="FLAVODOXIN_LIKE"/>
    <property type="match status" value="1"/>
</dbReference>
<reference key="1">
    <citation type="journal article" date="2001" name="Nature">
        <title>Complete genome sequence of a multiple drug resistant Salmonella enterica serovar Typhi CT18.</title>
        <authorList>
            <person name="Parkhill J."/>
            <person name="Dougan G."/>
            <person name="James K.D."/>
            <person name="Thomson N.R."/>
            <person name="Pickard D."/>
            <person name="Wain J."/>
            <person name="Churcher C.M."/>
            <person name="Mungall K.L."/>
            <person name="Bentley S.D."/>
            <person name="Holden M.T.G."/>
            <person name="Sebaihia M."/>
            <person name="Baker S."/>
            <person name="Basham D."/>
            <person name="Brooks K."/>
            <person name="Chillingworth T."/>
            <person name="Connerton P."/>
            <person name="Cronin A."/>
            <person name="Davis P."/>
            <person name="Davies R.M."/>
            <person name="Dowd L."/>
            <person name="White N."/>
            <person name="Farrar J."/>
            <person name="Feltwell T."/>
            <person name="Hamlin N."/>
            <person name="Haque A."/>
            <person name="Hien T.T."/>
            <person name="Holroyd S."/>
            <person name="Jagels K."/>
            <person name="Krogh A."/>
            <person name="Larsen T.S."/>
            <person name="Leather S."/>
            <person name="Moule S."/>
            <person name="O'Gaora P."/>
            <person name="Parry C."/>
            <person name="Quail M.A."/>
            <person name="Rutherford K.M."/>
            <person name="Simmonds M."/>
            <person name="Skelton J."/>
            <person name="Stevens K."/>
            <person name="Whitehead S."/>
            <person name="Barrell B.G."/>
        </authorList>
    </citation>
    <scope>NUCLEOTIDE SEQUENCE [LARGE SCALE GENOMIC DNA]</scope>
    <source>
        <strain>CT18</strain>
    </source>
</reference>
<reference key="2">
    <citation type="journal article" date="2003" name="J. Bacteriol.">
        <title>Comparative genomics of Salmonella enterica serovar Typhi strains Ty2 and CT18.</title>
        <authorList>
            <person name="Deng W."/>
            <person name="Liou S.-R."/>
            <person name="Plunkett G. III"/>
            <person name="Mayhew G.F."/>
            <person name="Rose D.J."/>
            <person name="Burland V."/>
            <person name="Kodoyianni V."/>
            <person name="Schwartz D.C."/>
            <person name="Blattner F.R."/>
        </authorList>
    </citation>
    <scope>NUCLEOTIDE SEQUENCE [LARGE SCALE GENOMIC DNA]</scope>
    <source>
        <strain>ATCC 700931 / Ty2</strain>
    </source>
</reference>
<keyword id="KW-0028">Amino-acid biosynthesis</keyword>
<keyword id="KW-0198">Cysteine biosynthesis</keyword>
<keyword id="KW-0249">Electron transport</keyword>
<keyword id="KW-0274">FAD</keyword>
<keyword id="KW-0285">Flavoprotein</keyword>
<keyword id="KW-0288">FMN</keyword>
<keyword id="KW-0521">NADP</keyword>
<keyword id="KW-0560">Oxidoreductase</keyword>
<keyword id="KW-0813">Transport</keyword>
<organism>
    <name type="scientific">Salmonella typhi</name>
    <dbReference type="NCBI Taxonomy" id="90370"/>
    <lineage>
        <taxon>Bacteria</taxon>
        <taxon>Pseudomonadati</taxon>
        <taxon>Pseudomonadota</taxon>
        <taxon>Gammaproteobacteria</taxon>
        <taxon>Enterobacterales</taxon>
        <taxon>Enterobacteriaceae</taxon>
        <taxon>Salmonella</taxon>
    </lineage>
</organism>
<evidence type="ECO:0000250" key="1"/>
<evidence type="ECO:0000255" key="2">
    <source>
        <dbReference type="HAMAP-Rule" id="MF_01541"/>
    </source>
</evidence>
<protein>
    <recommendedName>
        <fullName evidence="2">Sulfite reductase [NADPH] flavoprotein alpha-component</fullName>
        <shortName evidence="2">SiR-FP</shortName>
        <ecNumber evidence="2">1.8.1.2</ecNumber>
    </recommendedName>
</protein>
<comment type="function">
    <text evidence="2">Component of the sulfite reductase complex that catalyzes the 6-electron reduction of sulfite to sulfide. This is one of several activities required for the biosynthesis of L-cysteine from sulfate. The flavoprotein component catalyzes the electron flow from NADPH -&gt; FAD -&gt; FMN to the hemoprotein component.</text>
</comment>
<comment type="catalytic activity">
    <reaction evidence="2">
        <text>hydrogen sulfide + 3 NADP(+) + 3 H2O = sulfite + 3 NADPH + 4 H(+)</text>
        <dbReference type="Rhea" id="RHEA:13801"/>
        <dbReference type="ChEBI" id="CHEBI:15377"/>
        <dbReference type="ChEBI" id="CHEBI:15378"/>
        <dbReference type="ChEBI" id="CHEBI:17359"/>
        <dbReference type="ChEBI" id="CHEBI:29919"/>
        <dbReference type="ChEBI" id="CHEBI:57783"/>
        <dbReference type="ChEBI" id="CHEBI:58349"/>
        <dbReference type="EC" id="1.8.1.2"/>
    </reaction>
</comment>
<comment type="cofactor">
    <cofactor evidence="2">
        <name>FAD</name>
        <dbReference type="ChEBI" id="CHEBI:57692"/>
    </cofactor>
    <text evidence="2">Binds 1 FAD per subunit.</text>
</comment>
<comment type="cofactor">
    <cofactor evidence="2">
        <name>FMN</name>
        <dbReference type="ChEBI" id="CHEBI:58210"/>
    </cofactor>
    <text evidence="2">Binds 1 FMN per subunit.</text>
</comment>
<comment type="pathway">
    <text evidence="2">Sulfur metabolism; hydrogen sulfide biosynthesis; hydrogen sulfide from sulfite (NADPH route): step 1/1.</text>
</comment>
<comment type="subunit">
    <text evidence="2">Alpha(8)-beta(8). The alpha component is a flavoprotein, the beta component is a hemoprotein.</text>
</comment>
<comment type="similarity">
    <text evidence="2">Belongs to the NADPH-dependent sulphite reductase flavoprotein subunit CysJ family.</text>
</comment>
<comment type="similarity">
    <text evidence="2">In the N-terminal section; belongs to the flavodoxin family.</text>
</comment>
<comment type="similarity">
    <text evidence="2">In the C-terminal section; belongs to the flavoprotein pyridine nucleotide cytochrome reductase family.</text>
</comment>
<accession>Q8Z458</accession>
<accession>Q7C7K0</accession>
<name>CYSJ_SALTI</name>
<sequence length="599" mass="66176">MTTPAPLTGLLPLNPEQLARLQAATTDLTPEQLAWVSGFFWGVLNPRSGAVAVTPAPDGKMPGVTLISASQTGNARRVAEALRDDLLAANLNVTLVNAGDYKFKQIASEKLLVIVTSTQGEGEPPEEAVALHKFLFSKKAPKLENTAFAVFSLGDTSYEFFCQSGKDFDSKLAELGGERLLDRVDADVEYQAAASEWRACVVDVLKSRAPVAVPSQSVATGAVNDIHTSPYTKDAPLTATLSVNQKITGRNSEKDVRHIEIDLGDSGLRYQPGDALGVWYQNDPALVKELVELLWLKGDEPVMVDGKTLPLAEALEWHFELTVNTANIVENYATLTRSESLLPLVGDKAQLQHYAATTPIVDMVRFSPAQLDAQALIDLLRPLTPRLYSIASAQAEVESEVHITVGVVRYDIEGRARAGGASSFLADRVEEEGEVRVFIEHNDNFRLPANPQTPVIMIGPGTGIAPFRAFMQQRAADGAEGKNWLFFGNPHFTEDFLYQVEWQRYVKEGLLSRIDLAWSRDQKEKIYVQDKLREQGAELWRWINDGAHIYVCGDARRMAADVEKALLEVIAEFGGMDLESADEYLSELRVERRYQRDVY</sequence>
<proteinExistence type="inferred from homology"/>
<gene>
    <name evidence="2" type="primary">cysJ</name>
    <name type="ordered locus">STY3076</name>
    <name type="ordered locus">t2849</name>
</gene>